<name>SR541_ARATH</name>
<organism>
    <name type="scientific">Arabidopsis thaliana</name>
    <name type="common">Mouse-ear cress</name>
    <dbReference type="NCBI Taxonomy" id="3702"/>
    <lineage>
        <taxon>Eukaryota</taxon>
        <taxon>Viridiplantae</taxon>
        <taxon>Streptophyta</taxon>
        <taxon>Embryophyta</taxon>
        <taxon>Tracheophyta</taxon>
        <taxon>Spermatophyta</taxon>
        <taxon>Magnoliopsida</taxon>
        <taxon>eudicotyledons</taxon>
        <taxon>Gunneridae</taxon>
        <taxon>Pentapetalae</taxon>
        <taxon>rosids</taxon>
        <taxon>malvids</taxon>
        <taxon>Brassicales</taxon>
        <taxon>Brassicaceae</taxon>
        <taxon>Camelineae</taxon>
        <taxon>Arabidopsis</taxon>
    </lineage>
</organism>
<protein>
    <recommendedName>
        <fullName>Signal recognition particle subunit SRP54 1</fullName>
        <ecNumber evidence="3">3.6.5.4</ecNumber>
    </recommendedName>
    <alternativeName>
        <fullName>Signal recognition particle 54 kDa protein 1</fullName>
        <shortName>SRP54</shortName>
    </alternativeName>
</protein>
<comment type="function">
    <text evidence="2 3">Component of the signal recognition particle (SRP) complex, a ribonucleoprotein complex that mediates the cotranslational targeting of secretory and membrane proteins to the endoplasmic reticulum (ER). As part of the SRP complex, associates with the SRP receptor (SR) component SRPRA to target secretory proteins to the endoplasmic reticulum membrane. Binds to the signal sequence of presecretory proteins when they emerge from the ribosomes. Displays basal GTPase activity, and stimulates reciprocal GTPase activation of the SR subunit SRPRA. Forms a guanosine 5'-triphosphate (GTP)-dependent complex with the SR subunit SRPRA. SR compaction and GTPase mediated rearrangement of SR drive SRP-mediated cotranslational protein translocation into the ER (By similarity). Requires the presence of SRP9/SRP14 and/or SRP19 to stably interact with RNA (By similarity).</text>
</comment>
<comment type="catalytic activity">
    <reaction evidence="3">
        <text>GTP + H2O = GDP + phosphate + H(+)</text>
        <dbReference type="Rhea" id="RHEA:19669"/>
        <dbReference type="ChEBI" id="CHEBI:15377"/>
        <dbReference type="ChEBI" id="CHEBI:15378"/>
        <dbReference type="ChEBI" id="CHEBI:37565"/>
        <dbReference type="ChEBI" id="CHEBI:43474"/>
        <dbReference type="ChEBI" id="CHEBI:58189"/>
        <dbReference type="EC" id="3.6.5.4"/>
    </reaction>
    <physiologicalReaction direction="left-to-right" evidence="3">
        <dbReference type="Rhea" id="RHEA:19670"/>
    </physiologicalReaction>
</comment>
<comment type="subunit">
    <text evidence="3">Component of a signal recognition particle (SRP) complex that consists of a 7SL RNA molecule of 300 nucleotides and six protein subunits: SRP72, SRP68, SRP54, SRP19, SRP14 and SRP9.</text>
</comment>
<comment type="subcellular location">
    <subcellularLocation>
        <location evidence="3">Cytoplasm</location>
    </subcellularLocation>
    <subcellularLocation>
        <location evidence="3">Endoplasmic reticulum</location>
    </subcellularLocation>
</comment>
<comment type="domain">
    <text evidence="3">The NG domain, also named G domain, is a special guanosine triphosphatase (GTPase) domain, which binds GTP and forms a guanosine 5'-triphosphate (GTP)-dependent complex with a homologous NG domain in the SRP receptor subunit SRPRA. The two NG domains undergo cooperative rearrangements upon their assembly, which culminate in the reciprocal activation of the GTPase activity of one another. SRP receptor compaction upon binding with cargo-loaded SRP and GTPase rearrangement drive SRP-mediated cotranslational protein translocation into the ER.</text>
</comment>
<comment type="domain">
    <text evidence="3">The M domain binds the 7SL RNA in presence of SRP19 and binds the signal sequence of presecretory proteins.</text>
</comment>
<comment type="similarity">
    <text evidence="4">Belongs to the GTP-binding SRP family. SRP54 subfamily.</text>
</comment>
<feature type="chain" id="PRO_0000101204" description="Signal recognition particle subunit SRP54 1">
    <location>
        <begin position="1"/>
        <end position="479"/>
    </location>
</feature>
<feature type="region of interest" description="G-domain">
    <location>
        <begin position="1"/>
        <end position="295"/>
    </location>
</feature>
<feature type="region of interest" description="M-domain">
    <location>
        <begin position="296"/>
        <end position="479"/>
    </location>
</feature>
<feature type="binding site" evidence="1">
    <location>
        <begin position="108"/>
        <end position="115"/>
    </location>
    <ligand>
        <name>GTP</name>
        <dbReference type="ChEBI" id="CHEBI:37565"/>
    </ligand>
</feature>
<feature type="binding site" evidence="1">
    <location>
        <begin position="190"/>
        <end position="194"/>
    </location>
    <ligand>
        <name>GTP</name>
        <dbReference type="ChEBI" id="CHEBI:37565"/>
    </ligand>
</feature>
<feature type="binding site" evidence="1">
    <location>
        <begin position="248"/>
        <end position="251"/>
    </location>
    <ligand>
        <name>GTP</name>
        <dbReference type="ChEBI" id="CHEBI:37565"/>
    </ligand>
</feature>
<sequence length="479" mass="53007">MVLAELGGRITRAIQQMNNVTIIDEKVLNDFLNEITRALLQSDVSFGLVEKMQTNIKKIVNLDDLAAGHNKRLIIEQAIFKELCRMLDPGKPAFAPKKAKPSVVMFVGLQGAGKTTTCTKYAYYHQKKGYKAALVCADTFRAGAFDQLKQNATKAKIPFYGSYTESDPVKIAVEGVDRFKKEKCDLIIVDTSGRHKQAASLFEEMRQVAEATEPDLVIFVMDSSIGQAAFEQAEAFKETVSVGAVIITKMDGHAKGGGALSAVAATKSPVIFIGTGEHMDEFEVFDVKPFVSRLLGKGDWSGLVDKLQEVVPKDLQNELVENLSQGNFTLRSMYDQFQCSLRIPLNQLFSMLPGISAEMMPKGHGEESRVKMKRYMTMMDSMTNKELDSPNPKIFNESRIMRIARGSGRLVREVMEMLEEYKRIAKTMKGIKIPKNGDMSKVIPPQMLKQMGGMSGLQSLMKQMGSAKDMMGMFGGGGK</sequence>
<accession>P37106</accession>
<reference key="1">
    <citation type="journal article" date="1993" name="Plant Mol. Biol.">
        <title>Isolation and characterization of an Arabidopsis thaliana gene for the 54 kDa subunit of the signal recognition particle.</title>
        <authorList>
            <person name="Lindstrom J.T."/>
            <person name="Chu B."/>
            <person name="Belanger F.C."/>
        </authorList>
    </citation>
    <scope>NUCLEOTIDE SEQUENCE</scope>
</reference>
<reference key="2">
    <citation type="journal article" date="2000" name="Nature">
        <title>Sequence and analysis of chromosome 1 of the plant Arabidopsis thaliana.</title>
        <authorList>
            <person name="Theologis A."/>
            <person name="Ecker J.R."/>
            <person name="Palm C.J."/>
            <person name="Federspiel N.A."/>
            <person name="Kaul S."/>
            <person name="White O."/>
            <person name="Alonso J."/>
            <person name="Altafi H."/>
            <person name="Araujo R."/>
            <person name="Bowman C.L."/>
            <person name="Brooks S.Y."/>
            <person name="Buehler E."/>
            <person name="Chan A."/>
            <person name="Chao Q."/>
            <person name="Chen H."/>
            <person name="Cheuk R.F."/>
            <person name="Chin C.W."/>
            <person name="Chung M.K."/>
            <person name="Conn L."/>
            <person name="Conway A.B."/>
            <person name="Conway A.R."/>
            <person name="Creasy T.H."/>
            <person name="Dewar K."/>
            <person name="Dunn P."/>
            <person name="Etgu P."/>
            <person name="Feldblyum T.V."/>
            <person name="Feng J.-D."/>
            <person name="Fong B."/>
            <person name="Fujii C.Y."/>
            <person name="Gill J.E."/>
            <person name="Goldsmith A.D."/>
            <person name="Haas B."/>
            <person name="Hansen N.F."/>
            <person name="Hughes B."/>
            <person name="Huizar L."/>
            <person name="Hunter J.L."/>
            <person name="Jenkins J."/>
            <person name="Johnson-Hopson C."/>
            <person name="Khan S."/>
            <person name="Khaykin E."/>
            <person name="Kim C.J."/>
            <person name="Koo H.L."/>
            <person name="Kremenetskaia I."/>
            <person name="Kurtz D.B."/>
            <person name="Kwan A."/>
            <person name="Lam B."/>
            <person name="Langin-Hooper S."/>
            <person name="Lee A."/>
            <person name="Lee J.M."/>
            <person name="Lenz C.A."/>
            <person name="Li J.H."/>
            <person name="Li Y.-P."/>
            <person name="Lin X."/>
            <person name="Liu S.X."/>
            <person name="Liu Z.A."/>
            <person name="Luros J.S."/>
            <person name="Maiti R."/>
            <person name="Marziali A."/>
            <person name="Militscher J."/>
            <person name="Miranda M."/>
            <person name="Nguyen M."/>
            <person name="Nierman W.C."/>
            <person name="Osborne B.I."/>
            <person name="Pai G."/>
            <person name="Peterson J."/>
            <person name="Pham P.K."/>
            <person name="Rizzo M."/>
            <person name="Rooney T."/>
            <person name="Rowley D."/>
            <person name="Sakano H."/>
            <person name="Salzberg S.L."/>
            <person name="Schwartz J.R."/>
            <person name="Shinn P."/>
            <person name="Southwick A.M."/>
            <person name="Sun H."/>
            <person name="Tallon L.J."/>
            <person name="Tambunga G."/>
            <person name="Toriumi M.J."/>
            <person name="Town C.D."/>
            <person name="Utterback T."/>
            <person name="Van Aken S."/>
            <person name="Vaysberg M."/>
            <person name="Vysotskaia V.S."/>
            <person name="Walker M."/>
            <person name="Wu D."/>
            <person name="Yu G."/>
            <person name="Fraser C.M."/>
            <person name="Venter J.C."/>
            <person name="Davis R.W."/>
        </authorList>
    </citation>
    <scope>NUCLEOTIDE SEQUENCE [LARGE SCALE GENOMIC DNA]</scope>
    <source>
        <strain>cv. Columbia</strain>
    </source>
</reference>
<reference key="3">
    <citation type="journal article" date="2017" name="Plant J.">
        <title>Araport11: a complete reannotation of the Arabidopsis thaliana reference genome.</title>
        <authorList>
            <person name="Cheng C.Y."/>
            <person name="Krishnakumar V."/>
            <person name="Chan A.P."/>
            <person name="Thibaud-Nissen F."/>
            <person name="Schobel S."/>
            <person name="Town C.D."/>
        </authorList>
    </citation>
    <scope>GENOME REANNOTATION</scope>
    <source>
        <strain>cv. Columbia</strain>
    </source>
</reference>
<reference key="4">
    <citation type="journal article" date="2003" name="Science">
        <title>Empirical analysis of transcriptional activity in the Arabidopsis genome.</title>
        <authorList>
            <person name="Yamada K."/>
            <person name="Lim J."/>
            <person name="Dale J.M."/>
            <person name="Chen H."/>
            <person name="Shinn P."/>
            <person name="Palm C.J."/>
            <person name="Southwick A.M."/>
            <person name="Wu H.C."/>
            <person name="Kim C.J."/>
            <person name="Nguyen M."/>
            <person name="Pham P.K."/>
            <person name="Cheuk R.F."/>
            <person name="Karlin-Newmann G."/>
            <person name="Liu S.X."/>
            <person name="Lam B."/>
            <person name="Sakano H."/>
            <person name="Wu T."/>
            <person name="Yu G."/>
            <person name="Miranda M."/>
            <person name="Quach H.L."/>
            <person name="Tripp M."/>
            <person name="Chang C.H."/>
            <person name="Lee J.M."/>
            <person name="Toriumi M.J."/>
            <person name="Chan M.M."/>
            <person name="Tang C.C."/>
            <person name="Onodera C.S."/>
            <person name="Deng J.M."/>
            <person name="Akiyama K."/>
            <person name="Ansari Y."/>
            <person name="Arakawa T."/>
            <person name="Banh J."/>
            <person name="Banno F."/>
            <person name="Bowser L."/>
            <person name="Brooks S.Y."/>
            <person name="Carninci P."/>
            <person name="Chao Q."/>
            <person name="Choy N."/>
            <person name="Enju A."/>
            <person name="Goldsmith A.D."/>
            <person name="Gurjal M."/>
            <person name="Hansen N.F."/>
            <person name="Hayashizaki Y."/>
            <person name="Johnson-Hopson C."/>
            <person name="Hsuan V.W."/>
            <person name="Iida K."/>
            <person name="Karnes M."/>
            <person name="Khan S."/>
            <person name="Koesema E."/>
            <person name="Ishida J."/>
            <person name="Jiang P.X."/>
            <person name="Jones T."/>
            <person name="Kawai J."/>
            <person name="Kamiya A."/>
            <person name="Meyers C."/>
            <person name="Nakajima M."/>
            <person name="Narusaka M."/>
            <person name="Seki M."/>
            <person name="Sakurai T."/>
            <person name="Satou M."/>
            <person name="Tamse R."/>
            <person name="Vaysberg M."/>
            <person name="Wallender E.K."/>
            <person name="Wong C."/>
            <person name="Yamamura Y."/>
            <person name="Yuan S."/>
            <person name="Shinozaki K."/>
            <person name="Davis R.W."/>
            <person name="Theologis A."/>
            <person name="Ecker J.R."/>
        </authorList>
    </citation>
    <scope>NUCLEOTIDE SEQUENCE [LARGE SCALE MRNA]</scope>
    <source>
        <strain>cv. Columbia</strain>
    </source>
</reference>
<reference key="5">
    <citation type="submission" date="2002-03" db="EMBL/GenBank/DDBJ databases">
        <title>Full-length cDNA from Arabidopsis thaliana.</title>
        <authorList>
            <person name="Brover V.V."/>
            <person name="Troukhan M.E."/>
            <person name="Alexandrov N.A."/>
            <person name="Lu Y.-P."/>
            <person name="Flavell R.B."/>
            <person name="Feldmann K.A."/>
        </authorList>
    </citation>
    <scope>NUCLEOTIDE SEQUENCE [LARGE SCALE MRNA]</scope>
</reference>
<evidence type="ECO:0000250" key="1"/>
<evidence type="ECO:0000250" key="2">
    <source>
        <dbReference type="UniProtKB" id="P61010"/>
    </source>
</evidence>
<evidence type="ECO:0000250" key="3">
    <source>
        <dbReference type="UniProtKB" id="P61011"/>
    </source>
</evidence>
<evidence type="ECO:0000305" key="4"/>
<dbReference type="EC" id="3.6.5.4" evidence="3"/>
<dbReference type="EMBL" id="L19997">
    <property type="protein sequence ID" value="AAA19728.1"/>
    <property type="molecule type" value="Unassigned_DNA"/>
</dbReference>
<dbReference type="EMBL" id="AC007591">
    <property type="protein sequence ID" value="AAD39659.1"/>
    <property type="molecule type" value="Genomic_DNA"/>
</dbReference>
<dbReference type="EMBL" id="CP002684">
    <property type="protein sequence ID" value="AEE29301.1"/>
    <property type="molecule type" value="Genomic_DNA"/>
</dbReference>
<dbReference type="EMBL" id="AF344329">
    <property type="protein sequence ID" value="AAK06880.1"/>
    <property type="molecule type" value="mRNA"/>
</dbReference>
<dbReference type="EMBL" id="AY086187">
    <property type="protein sequence ID" value="AAM64266.1"/>
    <property type="molecule type" value="mRNA"/>
</dbReference>
<dbReference type="PIR" id="S42550">
    <property type="entry name" value="S42550"/>
</dbReference>
<dbReference type="RefSeq" id="NP_563970.1">
    <property type="nucleotide sequence ID" value="NM_101400.4"/>
</dbReference>
<dbReference type="SMR" id="P37106"/>
<dbReference type="BioGRID" id="23340">
    <property type="interactions" value="1"/>
</dbReference>
<dbReference type="DIP" id="DIP-59002N"/>
<dbReference type="FunCoup" id="P37106">
    <property type="interactions" value="3513"/>
</dbReference>
<dbReference type="IntAct" id="P37106">
    <property type="interactions" value="2"/>
</dbReference>
<dbReference type="MINT" id="P37106"/>
<dbReference type="STRING" id="3702.P37106"/>
<dbReference type="PaxDb" id="3702-AT1G15310.1"/>
<dbReference type="ProteomicsDB" id="226915"/>
<dbReference type="EnsemblPlants" id="AT1G15310.1">
    <property type="protein sequence ID" value="AT1G15310.1"/>
    <property type="gene ID" value="AT1G15310"/>
</dbReference>
<dbReference type="GeneID" id="838100"/>
<dbReference type="Gramene" id="AT1G15310.1">
    <property type="protein sequence ID" value="AT1G15310.1"/>
    <property type="gene ID" value="AT1G15310"/>
</dbReference>
<dbReference type="KEGG" id="ath:AT1G15310"/>
<dbReference type="Araport" id="AT1G15310"/>
<dbReference type="TAIR" id="AT1G15310">
    <property type="gene designation" value="ATHSRP54A"/>
</dbReference>
<dbReference type="eggNOG" id="KOG0780">
    <property type="taxonomic scope" value="Eukaryota"/>
</dbReference>
<dbReference type="HOGENOM" id="CLU_009301_6_1_1"/>
<dbReference type="InParanoid" id="P37106"/>
<dbReference type="OrthoDB" id="10250817at2759"/>
<dbReference type="PhylomeDB" id="P37106"/>
<dbReference type="PRO" id="PR:P37106"/>
<dbReference type="Proteomes" id="UP000006548">
    <property type="component" value="Chromosome 1"/>
</dbReference>
<dbReference type="ExpressionAtlas" id="P37106">
    <property type="expression patterns" value="baseline and differential"/>
</dbReference>
<dbReference type="GO" id="GO:0005737">
    <property type="term" value="C:cytoplasm"/>
    <property type="evidence" value="ECO:0000250"/>
    <property type="project" value="TAIR"/>
</dbReference>
<dbReference type="GO" id="GO:0005783">
    <property type="term" value="C:endoplasmic reticulum"/>
    <property type="evidence" value="ECO:0007669"/>
    <property type="project" value="UniProtKB-SubCell"/>
</dbReference>
<dbReference type="GO" id="GO:0005786">
    <property type="term" value="C:signal recognition particle, endoplasmic reticulum targeting"/>
    <property type="evidence" value="ECO:0000250"/>
    <property type="project" value="TAIR"/>
</dbReference>
<dbReference type="GO" id="GO:0008312">
    <property type="term" value="F:7S RNA binding"/>
    <property type="evidence" value="ECO:0007669"/>
    <property type="project" value="InterPro"/>
</dbReference>
<dbReference type="GO" id="GO:0016887">
    <property type="term" value="F:ATP hydrolysis activity"/>
    <property type="evidence" value="ECO:0007669"/>
    <property type="project" value="InterPro"/>
</dbReference>
<dbReference type="GO" id="GO:0005525">
    <property type="term" value="F:GTP binding"/>
    <property type="evidence" value="ECO:0007669"/>
    <property type="project" value="UniProtKB-KW"/>
</dbReference>
<dbReference type="GO" id="GO:0003924">
    <property type="term" value="F:GTPase activity"/>
    <property type="evidence" value="ECO:0007669"/>
    <property type="project" value="InterPro"/>
</dbReference>
<dbReference type="GO" id="GO:0006614">
    <property type="term" value="P:SRP-dependent cotranslational protein targeting to membrane"/>
    <property type="evidence" value="ECO:0007669"/>
    <property type="project" value="InterPro"/>
</dbReference>
<dbReference type="CDD" id="cd17875">
    <property type="entry name" value="SRP54_G"/>
    <property type="match status" value="1"/>
</dbReference>
<dbReference type="FunFam" id="3.40.50.300:FF:000022">
    <property type="entry name" value="Signal recognition particle 54 kDa subunit"/>
    <property type="match status" value="1"/>
</dbReference>
<dbReference type="FunFam" id="1.20.120.140:FF:000001">
    <property type="entry name" value="Signal recognition particle GTPase"/>
    <property type="match status" value="1"/>
</dbReference>
<dbReference type="Gene3D" id="3.40.50.300">
    <property type="entry name" value="P-loop containing nucleotide triphosphate hydrolases"/>
    <property type="match status" value="1"/>
</dbReference>
<dbReference type="Gene3D" id="1.20.120.140">
    <property type="entry name" value="Signal recognition particle SRP54, nucleotide-binding domain"/>
    <property type="match status" value="1"/>
</dbReference>
<dbReference type="Gene3D" id="1.10.260.30">
    <property type="entry name" value="Signal recognition particle, SRP54 subunit, M-domain"/>
    <property type="match status" value="1"/>
</dbReference>
<dbReference type="HAMAP" id="MF_00306">
    <property type="entry name" value="SRP54"/>
    <property type="match status" value="1"/>
</dbReference>
<dbReference type="InterPro" id="IPR003593">
    <property type="entry name" value="AAA+_ATPase"/>
</dbReference>
<dbReference type="InterPro" id="IPR027417">
    <property type="entry name" value="P-loop_NTPase"/>
</dbReference>
<dbReference type="InterPro" id="IPR036891">
    <property type="entry name" value="Signal_recog_part_SRP54_M_sf"/>
</dbReference>
<dbReference type="InterPro" id="IPR013822">
    <property type="entry name" value="Signal_recog_particl_SRP54_hlx"/>
</dbReference>
<dbReference type="InterPro" id="IPR004125">
    <property type="entry name" value="Signal_recog_particle_SRP54_M"/>
</dbReference>
<dbReference type="InterPro" id="IPR036225">
    <property type="entry name" value="SRP/SRP_N"/>
</dbReference>
<dbReference type="InterPro" id="IPR022941">
    <property type="entry name" value="SRP54"/>
</dbReference>
<dbReference type="InterPro" id="IPR006325">
    <property type="entry name" value="SRP54_euk"/>
</dbReference>
<dbReference type="InterPro" id="IPR000897">
    <property type="entry name" value="SRP54_GTPase_dom"/>
</dbReference>
<dbReference type="InterPro" id="IPR042101">
    <property type="entry name" value="SRP54_N_sf"/>
</dbReference>
<dbReference type="NCBIfam" id="TIGR01425">
    <property type="entry name" value="SRP54_euk"/>
    <property type="match status" value="1"/>
</dbReference>
<dbReference type="PANTHER" id="PTHR11564">
    <property type="entry name" value="SIGNAL RECOGNITION PARTICLE 54K PROTEIN SRP54"/>
    <property type="match status" value="1"/>
</dbReference>
<dbReference type="PANTHER" id="PTHR11564:SF5">
    <property type="entry name" value="SIGNAL RECOGNITION PARTICLE SUBUNIT SRP54"/>
    <property type="match status" value="1"/>
</dbReference>
<dbReference type="Pfam" id="PF00448">
    <property type="entry name" value="SRP54"/>
    <property type="match status" value="1"/>
</dbReference>
<dbReference type="Pfam" id="PF02881">
    <property type="entry name" value="SRP54_N"/>
    <property type="match status" value="1"/>
</dbReference>
<dbReference type="Pfam" id="PF02978">
    <property type="entry name" value="SRP_SPB"/>
    <property type="match status" value="1"/>
</dbReference>
<dbReference type="SMART" id="SM00382">
    <property type="entry name" value="AAA"/>
    <property type="match status" value="1"/>
</dbReference>
<dbReference type="SMART" id="SM00962">
    <property type="entry name" value="SRP54"/>
    <property type="match status" value="1"/>
</dbReference>
<dbReference type="SMART" id="SM00963">
    <property type="entry name" value="SRP54_N"/>
    <property type="match status" value="1"/>
</dbReference>
<dbReference type="SUPFAM" id="SSF47364">
    <property type="entry name" value="Domain of the SRP/SRP receptor G-proteins"/>
    <property type="match status" value="1"/>
</dbReference>
<dbReference type="SUPFAM" id="SSF52540">
    <property type="entry name" value="P-loop containing nucleoside triphosphate hydrolases"/>
    <property type="match status" value="1"/>
</dbReference>
<dbReference type="SUPFAM" id="SSF47446">
    <property type="entry name" value="Signal peptide-binding domain"/>
    <property type="match status" value="1"/>
</dbReference>
<dbReference type="PROSITE" id="PS00300">
    <property type="entry name" value="SRP54"/>
    <property type="match status" value="1"/>
</dbReference>
<proteinExistence type="evidence at transcript level"/>
<gene>
    <name type="primary">SRP-54A</name>
    <name type="synonym">SRP-54</name>
    <name type="ordered locus">At1g15310</name>
    <name type="ORF">F9L1.25</name>
</gene>
<keyword id="KW-0963">Cytoplasm</keyword>
<keyword id="KW-0256">Endoplasmic reticulum</keyword>
<keyword id="KW-0342">GTP-binding</keyword>
<keyword id="KW-0378">Hydrolase</keyword>
<keyword id="KW-0547">Nucleotide-binding</keyword>
<keyword id="KW-1185">Reference proteome</keyword>
<keyword id="KW-0687">Ribonucleoprotein</keyword>
<keyword id="KW-0694">RNA-binding</keyword>
<keyword id="KW-0733">Signal recognition particle</keyword>